<feature type="signal peptide" evidence="1">
    <location>
        <begin position="1"/>
        <end position="20"/>
    </location>
</feature>
<feature type="chain" id="PRO_0000451631" description="Potassium channel toxin Sp4" evidence="6">
    <location>
        <begin position="21"/>
        <end position="63"/>
    </location>
</feature>
<feature type="disulfide bond" evidence="2">
    <location>
        <begin position="31"/>
        <end position="53"/>
    </location>
</feature>
<feature type="disulfide bond" evidence="2">
    <location>
        <begin position="38"/>
        <end position="58"/>
    </location>
</feature>
<feature type="disulfide bond" evidence="2">
    <location>
        <begin position="42"/>
        <end position="60"/>
    </location>
</feature>
<sequence length="63" mass="6709">MNKVHFALFLLVLTVLAVSGFPSENAPTGGCPLSDNVCSSYCKKNKFGNEGKCHGTICKCSIK</sequence>
<accession>P0DQN4</accession>
<keyword id="KW-1015">Disulfide bond</keyword>
<keyword id="KW-0872">Ion channel impairing toxin</keyword>
<keyword id="KW-0528">Neurotoxin</keyword>
<keyword id="KW-0632">Potassium channel impairing toxin</keyword>
<keyword id="KW-0964">Secreted</keyword>
<keyword id="KW-0732">Signal</keyword>
<keyword id="KW-0800">Toxin</keyword>
<keyword id="KW-1220">Voltage-gated potassium channel impairing toxin</keyword>
<name>KA11N_SCOPC</name>
<organism>
    <name type="scientific">Scorpiops pococki</name>
    <name type="common">Scorpion</name>
    <dbReference type="NCBI Taxonomy" id="2766750"/>
    <lineage>
        <taxon>Eukaryota</taxon>
        <taxon>Metazoa</taxon>
        <taxon>Ecdysozoa</taxon>
        <taxon>Arthropoda</taxon>
        <taxon>Chelicerata</taxon>
        <taxon>Arachnida</taxon>
        <taxon>Scorpiones</taxon>
        <taxon>Iurida</taxon>
        <taxon>Chactoidea</taxon>
        <taxon>Euscorpiidae</taxon>
        <taxon>Scorpiopinae</taxon>
        <taxon>Scorpiopini</taxon>
        <taxon>Scorpiops</taxon>
    </lineage>
</organism>
<reference key="1">
    <citation type="journal article" date="2017" name="Cell Biosci.">
        <title>Cloning, expression and identification of KTX-Sp4, a selective Kv1.3 peptidic blocker from Scorpiops pococki.</title>
        <authorList>
            <person name="Zou Y."/>
            <person name="Zhang F."/>
            <person name="Li Y."/>
            <person name="Wang Y."/>
            <person name="Li Y."/>
            <person name="Long Z."/>
            <person name="Shi S."/>
            <person name="Shuai L."/>
            <person name="Liu J."/>
            <person name="Di Z."/>
            <person name="Yin S."/>
        </authorList>
    </citation>
    <scope>NUCLEOTIDE SEQUENCE [MRNA]</scope>
    <scope>FUNCTION</scope>
    <scope>RECOMBINANT EXPRESSION</scope>
    <source>
        <tissue>Venom gland</tissue>
    </source>
</reference>
<protein>
    <recommendedName>
        <fullName evidence="5">Potassium channel toxin Sp4</fullName>
        <shortName evidence="4">KTX-Sp4</shortName>
    </recommendedName>
</protein>
<evidence type="ECO:0000255" key="1"/>
<evidence type="ECO:0000255" key="2">
    <source>
        <dbReference type="PROSITE-ProRule" id="PRU01209"/>
    </source>
</evidence>
<evidence type="ECO:0000269" key="3">
    <source>
    </source>
</evidence>
<evidence type="ECO:0000303" key="4">
    <source>
    </source>
</evidence>
<evidence type="ECO:0000305" key="5"/>
<evidence type="ECO:0000305" key="6">
    <source>
    </source>
</evidence>
<dbReference type="SMR" id="P0DQN4"/>
<dbReference type="GO" id="GO:0005576">
    <property type="term" value="C:extracellular region"/>
    <property type="evidence" value="ECO:0007669"/>
    <property type="project" value="UniProtKB-SubCell"/>
</dbReference>
<dbReference type="GO" id="GO:0015459">
    <property type="term" value="F:potassium channel regulator activity"/>
    <property type="evidence" value="ECO:0007669"/>
    <property type="project" value="UniProtKB-KW"/>
</dbReference>
<dbReference type="GO" id="GO:0090729">
    <property type="term" value="F:toxin activity"/>
    <property type="evidence" value="ECO:0007669"/>
    <property type="project" value="UniProtKB-KW"/>
</dbReference>
<dbReference type="InterPro" id="IPR029237">
    <property type="entry name" value="Long_scorpion_toxin_alpha/beta"/>
</dbReference>
<dbReference type="PROSITE" id="PS51862">
    <property type="entry name" value="BSPN_CSAB"/>
    <property type="match status" value="1"/>
</dbReference>
<proteinExistence type="inferred from homology"/>
<comment type="function">
    <text evidence="3">This recombinant toxin selectively inhibits mouse voltage-gated potassium channel Kv1.3/KCNA3 (IC(50)=24.73 nM).</text>
</comment>
<comment type="subcellular location">
    <subcellularLocation>
        <location evidence="6">Secreted</location>
    </subcellularLocation>
</comment>
<comment type="tissue specificity">
    <text evidence="6">Expressed by the venom gland.</text>
</comment>
<comment type="miscellaneous">
    <text evidence="3">Negative results: shows only a weak inhibition on Kv1.1/KCNA1 (20.85% inhibition when tested with 1 uM of toxin) and Kv1.2/KCNA2 (7.23% inhibition, same conditions).</text>
</comment>
<comment type="similarity">
    <text evidence="5">Belongs to the long chain scorpion toxin family. Class 2 subfamily.</text>
</comment>